<accession>C6DBE0</accession>
<name>THIM_PECCP</name>
<reference key="1">
    <citation type="submission" date="2009-07" db="EMBL/GenBank/DDBJ databases">
        <title>Complete sequence of Pectobacterium carotovorum subsp. carotovorum PC1.</title>
        <authorList>
            <consortium name="US DOE Joint Genome Institute"/>
            <person name="Lucas S."/>
            <person name="Copeland A."/>
            <person name="Lapidus A."/>
            <person name="Glavina del Rio T."/>
            <person name="Tice H."/>
            <person name="Bruce D."/>
            <person name="Goodwin L."/>
            <person name="Pitluck S."/>
            <person name="Munk A.C."/>
            <person name="Brettin T."/>
            <person name="Detter J.C."/>
            <person name="Han C."/>
            <person name="Tapia R."/>
            <person name="Larimer F."/>
            <person name="Land M."/>
            <person name="Hauser L."/>
            <person name="Kyrpides N."/>
            <person name="Mikhailova N."/>
            <person name="Balakrishnan V."/>
            <person name="Glasner J."/>
            <person name="Perna N.T."/>
        </authorList>
    </citation>
    <scope>NUCLEOTIDE SEQUENCE [LARGE SCALE GENOMIC DNA]</scope>
    <source>
        <strain>PC1</strain>
    </source>
</reference>
<comment type="function">
    <text evidence="1">Catalyzes the phosphorylation of the hydroxyl group of 4-methyl-5-beta-hydroxyethylthiazole (THZ).</text>
</comment>
<comment type="catalytic activity">
    <reaction evidence="1">
        <text>5-(2-hydroxyethyl)-4-methylthiazole + ATP = 4-methyl-5-(2-phosphooxyethyl)-thiazole + ADP + H(+)</text>
        <dbReference type="Rhea" id="RHEA:24212"/>
        <dbReference type="ChEBI" id="CHEBI:15378"/>
        <dbReference type="ChEBI" id="CHEBI:17957"/>
        <dbReference type="ChEBI" id="CHEBI:30616"/>
        <dbReference type="ChEBI" id="CHEBI:58296"/>
        <dbReference type="ChEBI" id="CHEBI:456216"/>
        <dbReference type="EC" id="2.7.1.50"/>
    </reaction>
</comment>
<comment type="cofactor">
    <cofactor evidence="1">
        <name>Mg(2+)</name>
        <dbReference type="ChEBI" id="CHEBI:18420"/>
    </cofactor>
</comment>
<comment type="pathway">
    <text evidence="1">Cofactor biosynthesis; thiamine diphosphate biosynthesis; 4-methyl-5-(2-phosphoethyl)-thiazole from 5-(2-hydroxyethyl)-4-methylthiazole: step 1/1.</text>
</comment>
<comment type="similarity">
    <text evidence="1">Belongs to the Thz kinase family.</text>
</comment>
<gene>
    <name evidence="1" type="primary">thiM</name>
    <name type="ordered locus">PC1_2980</name>
</gene>
<keyword id="KW-0067">ATP-binding</keyword>
<keyword id="KW-0418">Kinase</keyword>
<keyword id="KW-0460">Magnesium</keyword>
<keyword id="KW-0479">Metal-binding</keyword>
<keyword id="KW-0547">Nucleotide-binding</keyword>
<keyword id="KW-0784">Thiamine biosynthesis</keyword>
<keyword id="KW-0808">Transferase</keyword>
<dbReference type="EC" id="2.7.1.50" evidence="1"/>
<dbReference type="EMBL" id="CP001657">
    <property type="protein sequence ID" value="ACT14003.1"/>
    <property type="molecule type" value="Genomic_DNA"/>
</dbReference>
<dbReference type="RefSeq" id="WP_015841158.1">
    <property type="nucleotide sequence ID" value="NC_012917.1"/>
</dbReference>
<dbReference type="SMR" id="C6DBE0"/>
<dbReference type="STRING" id="561230.PC1_2980"/>
<dbReference type="KEGG" id="pct:PC1_2980"/>
<dbReference type="eggNOG" id="COG2145">
    <property type="taxonomic scope" value="Bacteria"/>
</dbReference>
<dbReference type="HOGENOM" id="CLU_019943_0_1_6"/>
<dbReference type="OrthoDB" id="8909021at2"/>
<dbReference type="UniPathway" id="UPA00060">
    <property type="reaction ID" value="UER00139"/>
</dbReference>
<dbReference type="Proteomes" id="UP000002736">
    <property type="component" value="Chromosome"/>
</dbReference>
<dbReference type="GO" id="GO:0005524">
    <property type="term" value="F:ATP binding"/>
    <property type="evidence" value="ECO:0007669"/>
    <property type="project" value="UniProtKB-UniRule"/>
</dbReference>
<dbReference type="GO" id="GO:0004417">
    <property type="term" value="F:hydroxyethylthiazole kinase activity"/>
    <property type="evidence" value="ECO:0007669"/>
    <property type="project" value="UniProtKB-UniRule"/>
</dbReference>
<dbReference type="GO" id="GO:0000287">
    <property type="term" value="F:magnesium ion binding"/>
    <property type="evidence" value="ECO:0007669"/>
    <property type="project" value="UniProtKB-UniRule"/>
</dbReference>
<dbReference type="GO" id="GO:0009228">
    <property type="term" value="P:thiamine biosynthetic process"/>
    <property type="evidence" value="ECO:0007669"/>
    <property type="project" value="UniProtKB-KW"/>
</dbReference>
<dbReference type="GO" id="GO:0009229">
    <property type="term" value="P:thiamine diphosphate biosynthetic process"/>
    <property type="evidence" value="ECO:0007669"/>
    <property type="project" value="UniProtKB-UniRule"/>
</dbReference>
<dbReference type="CDD" id="cd01170">
    <property type="entry name" value="THZ_kinase"/>
    <property type="match status" value="1"/>
</dbReference>
<dbReference type="FunFam" id="3.40.1190.20:FF:000015">
    <property type="entry name" value="Hydroxyethylthiazole kinase"/>
    <property type="match status" value="1"/>
</dbReference>
<dbReference type="Gene3D" id="3.40.1190.20">
    <property type="match status" value="1"/>
</dbReference>
<dbReference type="HAMAP" id="MF_00228">
    <property type="entry name" value="Thz_kinase"/>
    <property type="match status" value="1"/>
</dbReference>
<dbReference type="InterPro" id="IPR000417">
    <property type="entry name" value="Hyethyz_kinase"/>
</dbReference>
<dbReference type="InterPro" id="IPR029056">
    <property type="entry name" value="Ribokinase-like"/>
</dbReference>
<dbReference type="NCBIfam" id="NF006830">
    <property type="entry name" value="PRK09355.1"/>
    <property type="match status" value="1"/>
</dbReference>
<dbReference type="NCBIfam" id="TIGR00694">
    <property type="entry name" value="thiM"/>
    <property type="match status" value="1"/>
</dbReference>
<dbReference type="Pfam" id="PF02110">
    <property type="entry name" value="HK"/>
    <property type="match status" value="1"/>
</dbReference>
<dbReference type="PIRSF" id="PIRSF000513">
    <property type="entry name" value="Thz_kinase"/>
    <property type="match status" value="1"/>
</dbReference>
<dbReference type="PRINTS" id="PR01099">
    <property type="entry name" value="HYETHTZKNASE"/>
</dbReference>
<dbReference type="SUPFAM" id="SSF53613">
    <property type="entry name" value="Ribokinase-like"/>
    <property type="match status" value="1"/>
</dbReference>
<organism>
    <name type="scientific">Pectobacterium carotovorum subsp. carotovorum (strain PC1)</name>
    <dbReference type="NCBI Taxonomy" id="561230"/>
    <lineage>
        <taxon>Bacteria</taxon>
        <taxon>Pseudomonadati</taxon>
        <taxon>Pseudomonadota</taxon>
        <taxon>Gammaproteobacteria</taxon>
        <taxon>Enterobacterales</taxon>
        <taxon>Pectobacteriaceae</taxon>
        <taxon>Pectobacterium</taxon>
    </lineage>
</organism>
<sequence>MNTRPADFSAVQAATSLTQFRSASPLVHCLTNDVVQSFTANVLLALNASPAMVVDPEEAAQFSAVADALLINVGTLERSRAEAMRTAVNSAHQAGTPWVLDPVAVGGLIFRSEFCRELLAWKPAAIRGNASEIMALAGLAAQGRGVDSADDSLAALPAARELARQVGTIVAVTGAVDYVTDGERDIAITGGDSMMTRVVGTGCALSAVVAGFCSLEGDRVSHVAAACYVMALAGQQAASVSQGTGSFIPNFLDRLYTLRAEDLA</sequence>
<feature type="chain" id="PRO_1000204361" description="Hydroxyethylthiazole kinase">
    <location>
        <begin position="1"/>
        <end position="264"/>
    </location>
</feature>
<feature type="binding site" evidence="1">
    <location>
        <position position="52"/>
    </location>
    <ligand>
        <name>substrate</name>
    </ligand>
</feature>
<feature type="binding site" evidence="1">
    <location>
        <position position="127"/>
    </location>
    <ligand>
        <name>ATP</name>
        <dbReference type="ChEBI" id="CHEBI:30616"/>
    </ligand>
</feature>
<feature type="binding site" evidence="1">
    <location>
        <position position="173"/>
    </location>
    <ligand>
        <name>ATP</name>
        <dbReference type="ChEBI" id="CHEBI:30616"/>
    </ligand>
</feature>
<feature type="binding site" evidence="1">
    <location>
        <position position="200"/>
    </location>
    <ligand>
        <name>substrate</name>
    </ligand>
</feature>
<proteinExistence type="inferred from homology"/>
<evidence type="ECO:0000255" key="1">
    <source>
        <dbReference type="HAMAP-Rule" id="MF_00228"/>
    </source>
</evidence>
<protein>
    <recommendedName>
        <fullName evidence="1">Hydroxyethylthiazole kinase</fullName>
        <ecNumber evidence="1">2.7.1.50</ecNumber>
    </recommendedName>
    <alternativeName>
        <fullName evidence="1">4-methyl-5-beta-hydroxyethylthiazole kinase</fullName>
        <shortName evidence="1">TH kinase</shortName>
        <shortName evidence="1">Thz kinase</shortName>
    </alternativeName>
</protein>